<protein>
    <recommendedName>
        <fullName evidence="1">tRNA-2-methylthio-N(6)-dimethylallyladenosine synthase</fullName>
        <ecNumber evidence="1">2.8.4.3</ecNumber>
    </recommendedName>
    <alternativeName>
        <fullName evidence="1">(Dimethylallyl)adenosine tRNA methylthiotransferase MiaB</fullName>
    </alternativeName>
    <alternativeName>
        <fullName evidence="1">tRNA-i(6)A37 methylthiotransferase</fullName>
    </alternativeName>
</protein>
<name>MIAB_ECTM1</name>
<keyword id="KW-0004">4Fe-4S</keyword>
<keyword id="KW-0963">Cytoplasm</keyword>
<keyword id="KW-0408">Iron</keyword>
<keyword id="KW-0411">Iron-sulfur</keyword>
<keyword id="KW-0479">Metal-binding</keyword>
<keyword id="KW-0949">S-adenosyl-L-methionine</keyword>
<keyword id="KW-0808">Transferase</keyword>
<keyword id="KW-0819">tRNA processing</keyword>
<organism>
    <name type="scientific">Ectopseudomonas mendocina (strain ymp)</name>
    <name type="common">Pseudomonas mendocina</name>
    <dbReference type="NCBI Taxonomy" id="399739"/>
    <lineage>
        <taxon>Bacteria</taxon>
        <taxon>Pseudomonadati</taxon>
        <taxon>Pseudomonadota</taxon>
        <taxon>Gammaproteobacteria</taxon>
        <taxon>Pseudomonadales</taxon>
        <taxon>Pseudomonadaceae</taxon>
        <taxon>Ectopseudomonas</taxon>
    </lineage>
</organism>
<evidence type="ECO:0000255" key="1">
    <source>
        <dbReference type="HAMAP-Rule" id="MF_01864"/>
    </source>
</evidence>
<evidence type="ECO:0000255" key="2">
    <source>
        <dbReference type="PROSITE-ProRule" id="PRU01266"/>
    </source>
</evidence>
<evidence type="ECO:0000305" key="3"/>
<dbReference type="EC" id="2.8.4.3" evidence="1"/>
<dbReference type="EMBL" id="CP000680">
    <property type="protein sequence ID" value="ABP86527.1"/>
    <property type="status" value="ALT_INIT"/>
    <property type="molecule type" value="Genomic_DNA"/>
</dbReference>
<dbReference type="SMR" id="A4XYW1"/>
<dbReference type="STRING" id="399739.Pmen_3779"/>
<dbReference type="KEGG" id="pmy:Pmen_3779"/>
<dbReference type="PATRIC" id="fig|399739.8.peg.3832"/>
<dbReference type="eggNOG" id="COG0621">
    <property type="taxonomic scope" value="Bacteria"/>
</dbReference>
<dbReference type="HOGENOM" id="CLU_018697_2_0_6"/>
<dbReference type="OrthoDB" id="9805215at2"/>
<dbReference type="GO" id="GO:0005829">
    <property type="term" value="C:cytosol"/>
    <property type="evidence" value="ECO:0007669"/>
    <property type="project" value="TreeGrafter"/>
</dbReference>
<dbReference type="GO" id="GO:0051539">
    <property type="term" value="F:4 iron, 4 sulfur cluster binding"/>
    <property type="evidence" value="ECO:0007669"/>
    <property type="project" value="UniProtKB-UniRule"/>
</dbReference>
<dbReference type="GO" id="GO:0046872">
    <property type="term" value="F:metal ion binding"/>
    <property type="evidence" value="ECO:0007669"/>
    <property type="project" value="UniProtKB-KW"/>
</dbReference>
<dbReference type="GO" id="GO:0035597">
    <property type="term" value="F:N6-isopentenyladenosine methylthiotransferase activity"/>
    <property type="evidence" value="ECO:0007669"/>
    <property type="project" value="TreeGrafter"/>
</dbReference>
<dbReference type="CDD" id="cd01335">
    <property type="entry name" value="Radical_SAM"/>
    <property type="match status" value="1"/>
</dbReference>
<dbReference type="FunFam" id="3.40.50.12160:FF:000001">
    <property type="entry name" value="tRNA-2-methylthio-N(6)-dimethylallyladenosine synthase"/>
    <property type="match status" value="1"/>
</dbReference>
<dbReference type="FunFam" id="3.80.30.20:FF:000001">
    <property type="entry name" value="tRNA-2-methylthio-N(6)-dimethylallyladenosine synthase 2"/>
    <property type="match status" value="1"/>
</dbReference>
<dbReference type="Gene3D" id="3.40.50.12160">
    <property type="entry name" value="Methylthiotransferase, N-terminal domain"/>
    <property type="match status" value="1"/>
</dbReference>
<dbReference type="Gene3D" id="3.80.30.20">
    <property type="entry name" value="tm_1862 like domain"/>
    <property type="match status" value="1"/>
</dbReference>
<dbReference type="HAMAP" id="MF_01864">
    <property type="entry name" value="tRNA_metthiotr_MiaB"/>
    <property type="match status" value="1"/>
</dbReference>
<dbReference type="InterPro" id="IPR006638">
    <property type="entry name" value="Elp3/MiaA/NifB-like_rSAM"/>
</dbReference>
<dbReference type="InterPro" id="IPR005839">
    <property type="entry name" value="Methylthiotransferase"/>
</dbReference>
<dbReference type="InterPro" id="IPR020612">
    <property type="entry name" value="Methylthiotransferase_CS"/>
</dbReference>
<dbReference type="InterPro" id="IPR013848">
    <property type="entry name" value="Methylthiotransferase_N"/>
</dbReference>
<dbReference type="InterPro" id="IPR038135">
    <property type="entry name" value="Methylthiotransferase_N_sf"/>
</dbReference>
<dbReference type="InterPro" id="IPR006463">
    <property type="entry name" value="MiaB_methiolase"/>
</dbReference>
<dbReference type="InterPro" id="IPR007197">
    <property type="entry name" value="rSAM"/>
</dbReference>
<dbReference type="InterPro" id="IPR023404">
    <property type="entry name" value="rSAM_horseshoe"/>
</dbReference>
<dbReference type="InterPro" id="IPR002792">
    <property type="entry name" value="TRAM_dom"/>
</dbReference>
<dbReference type="NCBIfam" id="TIGR01574">
    <property type="entry name" value="miaB-methiolase"/>
    <property type="match status" value="1"/>
</dbReference>
<dbReference type="NCBIfam" id="TIGR00089">
    <property type="entry name" value="MiaB/RimO family radical SAM methylthiotransferase"/>
    <property type="match status" value="1"/>
</dbReference>
<dbReference type="PANTHER" id="PTHR43020">
    <property type="entry name" value="CDK5 REGULATORY SUBUNIT-ASSOCIATED PROTEIN 1"/>
    <property type="match status" value="1"/>
</dbReference>
<dbReference type="PANTHER" id="PTHR43020:SF2">
    <property type="entry name" value="MITOCHONDRIAL TRNA METHYLTHIOTRANSFERASE CDK5RAP1"/>
    <property type="match status" value="1"/>
</dbReference>
<dbReference type="Pfam" id="PF04055">
    <property type="entry name" value="Radical_SAM"/>
    <property type="match status" value="1"/>
</dbReference>
<dbReference type="Pfam" id="PF01938">
    <property type="entry name" value="TRAM"/>
    <property type="match status" value="1"/>
</dbReference>
<dbReference type="Pfam" id="PF00919">
    <property type="entry name" value="UPF0004"/>
    <property type="match status" value="1"/>
</dbReference>
<dbReference type="SFLD" id="SFLDF00273">
    <property type="entry name" value="(dimethylallyl)adenosine_tRNA"/>
    <property type="match status" value="1"/>
</dbReference>
<dbReference type="SFLD" id="SFLDG01082">
    <property type="entry name" value="B12-binding_domain_containing"/>
    <property type="match status" value="1"/>
</dbReference>
<dbReference type="SFLD" id="SFLDS00029">
    <property type="entry name" value="Radical_SAM"/>
    <property type="match status" value="1"/>
</dbReference>
<dbReference type="SMART" id="SM00729">
    <property type="entry name" value="Elp3"/>
    <property type="match status" value="1"/>
</dbReference>
<dbReference type="SUPFAM" id="SSF102114">
    <property type="entry name" value="Radical SAM enzymes"/>
    <property type="match status" value="1"/>
</dbReference>
<dbReference type="PROSITE" id="PS51449">
    <property type="entry name" value="MTTASE_N"/>
    <property type="match status" value="1"/>
</dbReference>
<dbReference type="PROSITE" id="PS01278">
    <property type="entry name" value="MTTASE_RADICAL"/>
    <property type="match status" value="1"/>
</dbReference>
<dbReference type="PROSITE" id="PS51918">
    <property type="entry name" value="RADICAL_SAM"/>
    <property type="match status" value="1"/>
</dbReference>
<dbReference type="PROSITE" id="PS50926">
    <property type="entry name" value="TRAM"/>
    <property type="match status" value="1"/>
</dbReference>
<gene>
    <name evidence="1" type="primary">miaB</name>
    <name type="ordered locus">Pmen_3779</name>
</gene>
<proteinExistence type="inferred from homology"/>
<comment type="function">
    <text evidence="1">Catalyzes the methylthiolation of N6-(dimethylallyl)adenosine (i(6)A), leading to the formation of 2-methylthio-N6-(dimethylallyl)adenosine (ms(2)i(6)A) at position 37 in tRNAs that read codons beginning with uridine.</text>
</comment>
<comment type="catalytic activity">
    <reaction evidence="1">
        <text>N(6)-dimethylallyladenosine(37) in tRNA + (sulfur carrier)-SH + AH2 + 2 S-adenosyl-L-methionine = 2-methylsulfanyl-N(6)-dimethylallyladenosine(37) in tRNA + (sulfur carrier)-H + 5'-deoxyadenosine + L-methionine + A + S-adenosyl-L-homocysteine + 2 H(+)</text>
        <dbReference type="Rhea" id="RHEA:37067"/>
        <dbReference type="Rhea" id="RHEA-COMP:10375"/>
        <dbReference type="Rhea" id="RHEA-COMP:10376"/>
        <dbReference type="Rhea" id="RHEA-COMP:14737"/>
        <dbReference type="Rhea" id="RHEA-COMP:14739"/>
        <dbReference type="ChEBI" id="CHEBI:13193"/>
        <dbReference type="ChEBI" id="CHEBI:15378"/>
        <dbReference type="ChEBI" id="CHEBI:17319"/>
        <dbReference type="ChEBI" id="CHEBI:17499"/>
        <dbReference type="ChEBI" id="CHEBI:29917"/>
        <dbReference type="ChEBI" id="CHEBI:57844"/>
        <dbReference type="ChEBI" id="CHEBI:57856"/>
        <dbReference type="ChEBI" id="CHEBI:59789"/>
        <dbReference type="ChEBI" id="CHEBI:64428"/>
        <dbReference type="ChEBI" id="CHEBI:74415"/>
        <dbReference type="ChEBI" id="CHEBI:74417"/>
        <dbReference type="EC" id="2.8.4.3"/>
    </reaction>
</comment>
<comment type="cofactor">
    <cofactor evidence="1">
        <name>[4Fe-4S] cluster</name>
        <dbReference type="ChEBI" id="CHEBI:49883"/>
    </cofactor>
    <text evidence="1">Binds 2 [4Fe-4S] clusters. One cluster is coordinated with 3 cysteines and an exchangeable S-adenosyl-L-methionine.</text>
</comment>
<comment type="subunit">
    <text evidence="1">Monomer.</text>
</comment>
<comment type="subcellular location">
    <subcellularLocation>
        <location evidence="1">Cytoplasm</location>
    </subcellularLocation>
</comment>
<comment type="similarity">
    <text evidence="1">Belongs to the methylthiotransferase family. MiaB subfamily.</text>
</comment>
<comment type="sequence caution" evidence="3">
    <conflict type="erroneous initiation">
        <sequence resource="EMBL-CDS" id="ABP86527"/>
    </conflict>
</comment>
<reference key="1">
    <citation type="submission" date="2007-04" db="EMBL/GenBank/DDBJ databases">
        <title>Complete sequence of Pseudomonas mendocina ymp.</title>
        <authorList>
            <consortium name="US DOE Joint Genome Institute"/>
            <person name="Copeland A."/>
            <person name="Lucas S."/>
            <person name="Lapidus A."/>
            <person name="Barry K."/>
            <person name="Glavina del Rio T."/>
            <person name="Dalin E."/>
            <person name="Tice H."/>
            <person name="Pitluck S."/>
            <person name="Kiss H."/>
            <person name="Brettin T."/>
            <person name="Detter J.C."/>
            <person name="Bruce D."/>
            <person name="Han C."/>
            <person name="Schmutz J."/>
            <person name="Larimer F."/>
            <person name="Land M."/>
            <person name="Hauser L."/>
            <person name="Kyrpides N."/>
            <person name="Mikhailova N."/>
            <person name="Hersman L."/>
            <person name="Dubois J."/>
            <person name="Maurice P."/>
            <person name="Richardson P."/>
        </authorList>
    </citation>
    <scope>NUCLEOTIDE SEQUENCE [LARGE SCALE GENOMIC DNA]</scope>
    <source>
        <strain>ymp</strain>
    </source>
</reference>
<accession>A4XYW1</accession>
<feature type="chain" id="PRO_0000374466" description="tRNA-2-methylthio-N(6)-dimethylallyladenosine synthase">
    <location>
        <begin position="1"/>
        <end position="447"/>
    </location>
</feature>
<feature type="domain" description="MTTase N-terminal" evidence="1">
    <location>
        <begin position="3"/>
        <end position="120"/>
    </location>
</feature>
<feature type="domain" description="Radical SAM core" evidence="2">
    <location>
        <begin position="143"/>
        <end position="375"/>
    </location>
</feature>
<feature type="domain" description="TRAM" evidence="1">
    <location>
        <begin position="378"/>
        <end position="442"/>
    </location>
</feature>
<feature type="binding site" evidence="1">
    <location>
        <position position="12"/>
    </location>
    <ligand>
        <name>[4Fe-4S] cluster</name>
        <dbReference type="ChEBI" id="CHEBI:49883"/>
        <label>1</label>
    </ligand>
</feature>
<feature type="binding site" evidence="1">
    <location>
        <position position="49"/>
    </location>
    <ligand>
        <name>[4Fe-4S] cluster</name>
        <dbReference type="ChEBI" id="CHEBI:49883"/>
        <label>1</label>
    </ligand>
</feature>
<feature type="binding site" evidence="1">
    <location>
        <position position="83"/>
    </location>
    <ligand>
        <name>[4Fe-4S] cluster</name>
        <dbReference type="ChEBI" id="CHEBI:49883"/>
        <label>1</label>
    </ligand>
</feature>
<feature type="binding site" evidence="1">
    <location>
        <position position="157"/>
    </location>
    <ligand>
        <name>[4Fe-4S] cluster</name>
        <dbReference type="ChEBI" id="CHEBI:49883"/>
        <label>2</label>
        <note>4Fe-4S-S-AdoMet</note>
    </ligand>
</feature>
<feature type="binding site" evidence="1">
    <location>
        <position position="161"/>
    </location>
    <ligand>
        <name>[4Fe-4S] cluster</name>
        <dbReference type="ChEBI" id="CHEBI:49883"/>
        <label>2</label>
        <note>4Fe-4S-S-AdoMet</note>
    </ligand>
</feature>
<feature type="binding site" evidence="1">
    <location>
        <position position="164"/>
    </location>
    <ligand>
        <name>[4Fe-4S] cluster</name>
        <dbReference type="ChEBI" id="CHEBI:49883"/>
        <label>2</label>
        <note>4Fe-4S-S-AdoMet</note>
    </ligand>
</feature>
<sequence length="447" mass="49992">MTKKLYIETHGCQMNEYDSSRMVDLLGEHQALEVTEKPEEADVILLNTCSIREKAQDKVFSQLGRWRELKQANPDLVIGVGGCVASQEGAAIRDRAPYVDVVFGPQTLHRLPEMIDAARTTKTAQVDISFPEIEKFDRLPEPRVDGPSAFVSVMEGCSKYCTFCVVPYTRGEEVSRPLADVLLEITQLTDKGVKEVTLLGQNVNGYRGATPDGRIADFAELLHAVAALDGIERIRYTTSHPLEFSDAIIAAHAEIPQLVKYLHLPVQSGSDRILAAMKRNHTALEYKSRIRKLRAAVPDILISSDFIVGFPGETEKDFEQTMKLIEDVGFDFSFSFIYSSRPGTPAADLVDDTPDEVKKQRLAILQHRINQYGFENSRRMVGTVQRILVSDYSKKDPGMLQGRTEQNRIVNFRCDNPRLIGQFVDVHIDDALPHSLRGTLLDASTVN</sequence>